<comment type="function">
    <text evidence="1">Non-catalytic component of the TSC-TBC complex, a multiprotein complex that acts as a negative regulator of the canonical mTORC1 complex, an evolutionarily conserved central nutrient sensor that stimulates anabolic reactions and macromolecule biosynthesis to promote cellular biomass generation and growth. The TSC-TBC complex acts as a GTPase-activating protein (GAP) for the small GTPase RHEB, a direct activator of the protein kinase activity of mTORC1. In absence of nutrients, the TSC-TBC complex inhibits mTORC1, thereby preventing phosphorylation of ribosomal protein S6 kinase (RPS6KB1 and RPS6KB2) and EIF4EBP1 (4E-BP1) by the mTORC1 signaling. The TSC-TBC complex is inactivated in response to nutrients, relieving inhibition of mTORC1.</text>
</comment>
<comment type="subunit">
    <text evidence="1">Component of the TSC-TBC complex (also named Rhebulator complex), composed of 2 molecules of TSC1, 2 molecules of TSC2 and 1 molecule of TBC1D7.</text>
</comment>
<comment type="subcellular location">
    <subcellularLocation>
        <location evidence="1">Lysosome membrane</location>
    </subcellularLocation>
    <subcellularLocation>
        <location evidence="1">Cytoplasmic vesicle</location>
    </subcellularLocation>
    <subcellularLocation>
        <location evidence="1">Cytoplasm</location>
        <location evidence="1">Cytosol</location>
    </subcellularLocation>
    <text evidence="1">Localizes in the cytoplasmic vesicles of the endomembrane in association with the TSC-TBC complex. Recruited to lysosomal membranes in a RHEB-dependent process in absence of nutrients. In response to nutrients, the complex dissociates from lysosomal membranes and relocalizes to the cytosol.</text>
</comment>
<comment type="alternative products">
    <event type="alternative splicing"/>
    <isoform>
        <id>F6UMY3-1</id>
        <name>1</name>
        <sequence type="displayed"/>
    </isoform>
    <isoform>
        <id>F6UMY3-2</id>
        <name>2</name>
        <sequence type="described" ref="VSP_044197"/>
    </isoform>
</comment>
<organism>
    <name type="scientific">Xenopus tropicalis</name>
    <name type="common">Western clawed frog</name>
    <name type="synonym">Silurana tropicalis</name>
    <dbReference type="NCBI Taxonomy" id="8364"/>
    <lineage>
        <taxon>Eukaryota</taxon>
        <taxon>Metazoa</taxon>
        <taxon>Chordata</taxon>
        <taxon>Craniata</taxon>
        <taxon>Vertebrata</taxon>
        <taxon>Euteleostomi</taxon>
        <taxon>Amphibia</taxon>
        <taxon>Batrachia</taxon>
        <taxon>Anura</taxon>
        <taxon>Pipoidea</taxon>
        <taxon>Pipidae</taxon>
        <taxon>Xenopodinae</taxon>
        <taxon>Xenopus</taxon>
        <taxon>Silurana</taxon>
    </lineage>
</organism>
<evidence type="ECO:0000250" key="1">
    <source>
        <dbReference type="UniProtKB" id="Q9P0N9"/>
    </source>
</evidence>
<evidence type="ECO:0000255" key="2">
    <source>
        <dbReference type="PROSITE-ProRule" id="PRU00163"/>
    </source>
</evidence>
<evidence type="ECO:0000303" key="3">
    <source ref="1"/>
</evidence>
<evidence type="ECO:0000305" key="4"/>
<dbReference type="EMBL" id="CR761423">
    <property type="protein sequence ID" value="CAJ82285.1"/>
    <property type="molecule type" value="mRNA"/>
</dbReference>
<dbReference type="EMBL" id="AAMC01015138">
    <property type="status" value="NOT_ANNOTATED_CDS"/>
    <property type="molecule type" value="Genomic_DNA"/>
</dbReference>
<dbReference type="EMBL" id="BC121213">
    <property type="protein sequence ID" value="AAI21214.1"/>
    <property type="molecule type" value="mRNA"/>
</dbReference>
<dbReference type="RefSeq" id="NP_001016332.2">
    <property type="nucleotide sequence ID" value="NM_001016332.3"/>
</dbReference>
<dbReference type="RefSeq" id="XP_012820148.1">
    <property type="nucleotide sequence ID" value="XM_012964694.2"/>
</dbReference>
<dbReference type="SMR" id="F6UMY3"/>
<dbReference type="FunCoup" id="F6UMY3">
    <property type="interactions" value="1570"/>
</dbReference>
<dbReference type="PaxDb" id="8364-ENSXETP00000002327"/>
<dbReference type="DNASU" id="549086"/>
<dbReference type="GeneID" id="549086"/>
<dbReference type="KEGG" id="xtr:549086"/>
<dbReference type="CTD" id="51256"/>
<dbReference type="eggNOG" id="ENOG502QPZD">
    <property type="taxonomic scope" value="Eukaryota"/>
</dbReference>
<dbReference type="HOGENOM" id="CLU_082520_0_0_1"/>
<dbReference type="InParanoid" id="F6UMY3"/>
<dbReference type="OrthoDB" id="18718at2759"/>
<dbReference type="TreeFam" id="TF323655"/>
<dbReference type="Reactome" id="R-XTR-8854214">
    <property type="pathway name" value="TBC/RABGAPs"/>
</dbReference>
<dbReference type="Proteomes" id="UP000008143">
    <property type="component" value="Chromosome 6"/>
</dbReference>
<dbReference type="GO" id="GO:0031410">
    <property type="term" value="C:cytoplasmic vesicle"/>
    <property type="evidence" value="ECO:0007669"/>
    <property type="project" value="UniProtKB-KW"/>
</dbReference>
<dbReference type="GO" id="GO:0005829">
    <property type="term" value="C:cytosol"/>
    <property type="evidence" value="ECO:0000250"/>
    <property type="project" value="UniProtKB"/>
</dbReference>
<dbReference type="GO" id="GO:0005765">
    <property type="term" value="C:lysosomal membrane"/>
    <property type="evidence" value="ECO:0007669"/>
    <property type="project" value="UniProtKB-SubCell"/>
</dbReference>
<dbReference type="GO" id="GO:0033596">
    <property type="term" value="C:TSC1-TSC2 complex"/>
    <property type="evidence" value="ECO:0000250"/>
    <property type="project" value="UniProtKB"/>
</dbReference>
<dbReference type="GO" id="GO:0005096">
    <property type="term" value="F:GTPase activator activity"/>
    <property type="evidence" value="ECO:0007669"/>
    <property type="project" value="UniProtKB-KW"/>
</dbReference>
<dbReference type="GO" id="GO:0090630">
    <property type="term" value="P:activation of GTPase activity"/>
    <property type="evidence" value="ECO:0000250"/>
    <property type="project" value="UniProtKB"/>
</dbReference>
<dbReference type="GO" id="GO:0009267">
    <property type="term" value="P:cellular response to starvation"/>
    <property type="evidence" value="ECO:0000250"/>
    <property type="project" value="UniProtKB"/>
</dbReference>
<dbReference type="GO" id="GO:0032007">
    <property type="term" value="P:negative regulation of TOR signaling"/>
    <property type="evidence" value="ECO:0000250"/>
    <property type="project" value="UniProtKB"/>
</dbReference>
<dbReference type="GO" id="GO:1904262">
    <property type="term" value="P:negative regulation of TORC1 signaling"/>
    <property type="evidence" value="ECO:0000250"/>
    <property type="project" value="UniProtKB"/>
</dbReference>
<dbReference type="GO" id="GO:0070848">
    <property type="term" value="P:response to growth factor"/>
    <property type="evidence" value="ECO:0000250"/>
    <property type="project" value="UniProtKB"/>
</dbReference>
<dbReference type="FunFam" id="1.10.10.750:FF:000006">
    <property type="entry name" value="TBC1 domain family member 7"/>
    <property type="match status" value="1"/>
</dbReference>
<dbReference type="FunFam" id="1.10.472.80:FF:000028">
    <property type="entry name" value="TBC1 domain family member 7"/>
    <property type="match status" value="1"/>
</dbReference>
<dbReference type="FunFam" id="1.10.8.680:FF:000001">
    <property type="entry name" value="TBC1 domain family, member 7"/>
    <property type="match status" value="1"/>
</dbReference>
<dbReference type="Gene3D" id="1.10.10.750">
    <property type="entry name" value="Ypt/Rab-GAP domain of gyp1p, domain 1"/>
    <property type="match status" value="1"/>
</dbReference>
<dbReference type="Gene3D" id="1.10.8.680">
    <property type="entry name" value="Ypt/Rab-GAP domain of gyp1p, domain 2"/>
    <property type="match status" value="1"/>
</dbReference>
<dbReference type="Gene3D" id="1.10.472.80">
    <property type="entry name" value="Ypt/Rab-GAP domain of gyp1p, domain 3"/>
    <property type="match status" value="1"/>
</dbReference>
<dbReference type="InterPro" id="IPR000195">
    <property type="entry name" value="Rab-GAP-TBC_dom"/>
</dbReference>
<dbReference type="InterPro" id="IPR035969">
    <property type="entry name" value="Rab-GAP_TBC_sf"/>
</dbReference>
<dbReference type="InterPro" id="IPR039842">
    <property type="entry name" value="TBC1D7"/>
</dbReference>
<dbReference type="InterPro" id="IPR043039">
    <property type="entry name" value="TBC1D7_dom2"/>
</dbReference>
<dbReference type="PANTHER" id="PTHR13530">
    <property type="entry name" value="TBC1 DOMAIN FAMILY MEMBER 7"/>
    <property type="match status" value="1"/>
</dbReference>
<dbReference type="PANTHER" id="PTHR13530:SF3">
    <property type="entry name" value="TBC1 DOMAIN FAMILY MEMBER 7"/>
    <property type="match status" value="1"/>
</dbReference>
<dbReference type="Pfam" id="PF00566">
    <property type="entry name" value="RabGAP-TBC"/>
    <property type="match status" value="1"/>
</dbReference>
<dbReference type="SUPFAM" id="SSF47923">
    <property type="entry name" value="Ypt/Rab-GAP domain of gyp1p"/>
    <property type="match status" value="2"/>
</dbReference>
<dbReference type="PROSITE" id="PS50086">
    <property type="entry name" value="TBC_RABGAP"/>
    <property type="match status" value="1"/>
</dbReference>
<proteinExistence type="evidence at transcript level"/>
<keyword id="KW-0025">Alternative splicing</keyword>
<keyword id="KW-0963">Cytoplasm</keyword>
<keyword id="KW-0968">Cytoplasmic vesicle</keyword>
<keyword id="KW-0343">GTPase activation</keyword>
<keyword id="KW-0458">Lysosome</keyword>
<keyword id="KW-0472">Membrane</keyword>
<keyword id="KW-1185">Reference proteome</keyword>
<feature type="chain" id="PRO_0000419488" description="TBC1 domain family member 7">
    <location>
        <begin position="1"/>
        <end position="293"/>
    </location>
</feature>
<feature type="domain" description="Rab-GAP TBC" evidence="2">
    <location>
        <begin position="50"/>
        <end position="231"/>
    </location>
</feature>
<feature type="splice variant" id="VSP_044197" description="In isoform 2." evidence="3">
    <original>M</original>
    <variation>MRPSFSILTTDAVQIM</variation>
    <location>
        <position position="1"/>
    </location>
</feature>
<feature type="sequence conflict" description="In Ref. 1; CAJ82285 and 3; AAI21214." evidence="4" ref="1 3">
    <original>H</original>
    <variation>Q</variation>
    <location>
        <position position="69"/>
    </location>
</feature>
<feature type="sequence conflict" description="In Ref. 3; AAI21214." evidence="4" ref="3">
    <original>T</original>
    <variation>M</variation>
    <location>
        <position position="251"/>
    </location>
</feature>
<sequence length="293" mass="34283">MSEDSQRNFRSVYYEKVGFRGVEEKKSLEILLKDDRLDIEKLCTFSQRFPLPSMYRILVWKVLLGILPHHQESHPMVMEYRREQYQDVYHALQVIHFISEATPKIEVFLYMYHLETGKLSQSQPYPMEPEDDIFLAIASTMEEMVDDDVDCYWLIRNFVNHFDSKFKDSKLQLHKAFEHYLNLEDSRLVAHLKASSALEKLPYDLWFKKCFAGCLSASSLQRVWDKLVSGSCKILVFVAVEILLTYKLKVTALNNAESINKFLEKIPEDNTDPIVSKAIDLWHKHCGIPAHSI</sequence>
<accession>F6UMY3</accession>
<accession>F6RRZ2</accession>
<accession>Q0VA74</accession>
<accession>Q28GE3</accession>
<name>TBCD7_XENTR</name>
<gene>
    <name type="primary">tbc1d7</name>
    <name evidence="3" type="ORF">TEgg086p06.1</name>
</gene>
<protein>
    <recommendedName>
        <fullName evidence="4">TBC1 domain family member 7</fullName>
    </recommendedName>
</protein>
<reference key="1">
    <citation type="submission" date="2006-10" db="EMBL/GenBank/DDBJ databases">
        <authorList>
            <consortium name="Sanger Xenopus tropicalis EST/cDNA project"/>
        </authorList>
    </citation>
    <scope>NUCLEOTIDE SEQUENCE [LARGE SCALE MRNA] (ISOFORM 2)</scope>
    <source>
        <tissue>Egg</tissue>
    </source>
</reference>
<reference key="2">
    <citation type="journal article" date="2010" name="Science">
        <title>The genome of the Western clawed frog Xenopus tropicalis.</title>
        <authorList>
            <person name="Hellsten U."/>
            <person name="Harland R.M."/>
            <person name="Gilchrist M.J."/>
            <person name="Hendrix D."/>
            <person name="Jurka J."/>
            <person name="Kapitonov V."/>
            <person name="Ovcharenko I."/>
            <person name="Putnam N.H."/>
            <person name="Shu S."/>
            <person name="Taher L."/>
            <person name="Blitz I.L."/>
            <person name="Blumberg B."/>
            <person name="Dichmann D.S."/>
            <person name="Dubchak I."/>
            <person name="Amaya E."/>
            <person name="Detter J.C."/>
            <person name="Fletcher R."/>
            <person name="Gerhard D.S."/>
            <person name="Goodstein D."/>
            <person name="Graves T."/>
            <person name="Grigoriev I.V."/>
            <person name="Grimwood J."/>
            <person name="Kawashima T."/>
            <person name="Lindquist E."/>
            <person name="Lucas S.M."/>
            <person name="Mead P.E."/>
            <person name="Mitros T."/>
            <person name="Ogino H."/>
            <person name="Ohta Y."/>
            <person name="Poliakov A.V."/>
            <person name="Pollet N."/>
            <person name="Robert J."/>
            <person name="Salamov A."/>
            <person name="Sater A.K."/>
            <person name="Schmutz J."/>
            <person name="Terry A."/>
            <person name="Vize P.D."/>
            <person name="Warren W.C."/>
            <person name="Wells D."/>
            <person name="Wills A."/>
            <person name="Wilson R.K."/>
            <person name="Zimmerman L.B."/>
            <person name="Zorn A.M."/>
            <person name="Grainger R."/>
            <person name="Grammer T."/>
            <person name="Khokha M.K."/>
            <person name="Richardson P.M."/>
            <person name="Rokhsar D.S."/>
        </authorList>
    </citation>
    <scope>NUCLEOTIDE SEQUENCE [LARGE SCALE GENOMIC DNA]</scope>
</reference>
<reference key="3">
    <citation type="submission" date="2006-08" db="EMBL/GenBank/DDBJ databases">
        <authorList>
            <consortium name="NIH - Xenopus Gene Collection (XGC) project"/>
        </authorList>
    </citation>
    <scope>NUCLEOTIDE SEQUENCE [LARGE SCALE MRNA] (ISOFORM 1)</scope>
    <source>
        <tissue>Testis</tissue>
    </source>
</reference>